<proteinExistence type="evidence at protein level"/>
<protein>
    <recommendedName>
        <fullName evidence="2">Loki profilin-1</fullName>
    </recommendedName>
</protein>
<organism>
    <name type="scientific">Lokiarchaeum sp. (strain GC14_75)</name>
    <dbReference type="NCBI Taxonomy" id="1538547"/>
    <lineage>
        <taxon>Archaea</taxon>
        <taxon>Promethearchaeati</taxon>
        <taxon>Promethearchaeota</taxon>
        <taxon>Promethearchaeia</taxon>
        <taxon>Promethearchaeales</taxon>
        <taxon>Promethearchaeaceae</taxon>
        <taxon>Candidatus Lokiarchaeum</taxon>
    </lineage>
</organism>
<evidence type="ECO:0000269" key="1">
    <source>
    </source>
</evidence>
<evidence type="ECO:0000303" key="2">
    <source>
    </source>
</evidence>
<evidence type="ECO:0000305" key="3"/>
<evidence type="ECO:0000305" key="4">
    <source>
    </source>
</evidence>
<evidence type="ECO:0007744" key="5">
    <source>
        <dbReference type="PDB" id="5YED"/>
    </source>
</evidence>
<evidence type="ECO:0007744" key="6">
    <source>
        <dbReference type="PDB" id="5YEE"/>
    </source>
</evidence>
<evidence type="ECO:0007829" key="7">
    <source>
        <dbReference type="PDB" id="5YED"/>
    </source>
</evidence>
<sequence>MSEKIEGIIDDLLNLEENAHGIAIIGKDGKIITQTENWNISNDLDKLNEFLNEKLALGKKGITSLSIQGIKYMIVENTEERKIGTNITGKGHVVICPIPIGGTGALITYVNPRAGPRDVLFNVQEYAKKLTDLI</sequence>
<reference key="1">
    <citation type="journal article" date="2015" name="Nature">
        <title>Complex archaea that bridge the gap between prokaryotes and eukaryotes.</title>
        <authorList>
            <person name="Spang A."/>
            <person name="Saw J.H."/>
            <person name="Jorgensen S.L."/>
            <person name="Zaremba-Niedzwiedzka K."/>
            <person name="Martijn J."/>
            <person name="Lind A.E."/>
            <person name="van Eijk R."/>
            <person name="Schleper C."/>
            <person name="Guy L."/>
            <person name="Ettema T.J."/>
        </authorList>
    </citation>
    <scope>NUCLEOTIDE SEQUENCE [LARGE SCALE GENOMIC DNA]</scope>
    <source>
        <strain>GC14_75</strain>
    </source>
</reference>
<reference evidence="5 6" key="2">
    <citation type="journal article" date="2018" name="Nature">
        <title>Genomes of Asgard archaea encode profilins that regulate actin.</title>
        <authorList>
            <person name="Akil C."/>
            <person name="Robinson R.C."/>
        </authorList>
    </citation>
    <scope>X-RAY CRYSTALLOGRAPHY (1.60 ANGSTROMS) ALONE AND IN COMPLEX WITH RABBIT ACTIN</scope>
    <scope>FUNCTION</scope>
    <scope>ACTIVITY REGULATION</scope>
    <scope>SUBCELLULAR LOCATION</scope>
    <scope>DOMAIN</scope>
</reference>
<keyword id="KW-0002">3D-structure</keyword>
<keyword id="KW-0009">Actin-binding</keyword>
<keyword id="KW-0963">Cytoplasm</keyword>
<keyword id="KW-0206">Cytoskeleton</keyword>
<comment type="function">
    <text evidence="1">Binds to actin and affects the structure of the cytoskeleton. At high concentrations inhibits spontaneous rabbit actin nucleation. This strongly suggests this archaea has a profilin-regulated actin system, and actin-type genes can be identified in this organism.</text>
</comment>
<comment type="activity regulation">
    <text evidence="4">Inhibition of rabbit actin polymerization is reduced by phosphatidylinositol-(4,5)-P2(1,2-dipalmitoyl), a soluble form of the phospholipid phosphatidylinositol, suggesting an unknown lipid might regulate actin-profilin interaction in vivo.</text>
</comment>
<comment type="subcellular location">
    <subcellularLocation>
        <location evidence="4">Cytoplasm</location>
        <location evidence="4">Cytoskeleton</location>
    </subcellularLocation>
</comment>
<comment type="domain">
    <text evidence="1">The Loki loop (specific to some members) becomes ordered on binding to rabbit actin.</text>
</comment>
<comment type="miscellaneous">
    <text evidence="3">It is not clear if Loki profilins 1, 2 and 3 are from the same strain.</text>
</comment>
<comment type="similarity">
    <text evidence="3">Belongs to the Asgard profilin family.</text>
</comment>
<dbReference type="EMBL" id="JYIM01000447">
    <property type="protein sequence ID" value="KKK40842.1"/>
    <property type="molecule type" value="Genomic_DNA"/>
</dbReference>
<dbReference type="PDB" id="5YED">
    <property type="method" value="X-ray"/>
    <property type="resolution" value="1.60 A"/>
    <property type="chains" value="A=1-134"/>
</dbReference>
<dbReference type="PDB" id="5YEE">
    <property type="method" value="X-ray"/>
    <property type="resolution" value="1.81 A"/>
    <property type="chains" value="A=1-134"/>
</dbReference>
<dbReference type="PDBsum" id="5YED"/>
<dbReference type="PDBsum" id="5YEE"/>
<dbReference type="SMR" id="A0A0F8V8L2"/>
<dbReference type="KEGG" id="loki:Lokiarch_47830"/>
<dbReference type="Proteomes" id="UP000034722">
    <property type="component" value="Unassembled WGS sequence"/>
</dbReference>
<dbReference type="GO" id="GO:0005737">
    <property type="term" value="C:cytoplasm"/>
    <property type="evidence" value="ECO:0007669"/>
    <property type="project" value="UniProtKB-KW"/>
</dbReference>
<dbReference type="GO" id="GO:0005856">
    <property type="term" value="C:cytoskeleton"/>
    <property type="evidence" value="ECO:0007669"/>
    <property type="project" value="UniProtKB-SubCell"/>
</dbReference>
<dbReference type="GO" id="GO:0003779">
    <property type="term" value="F:actin binding"/>
    <property type="evidence" value="ECO:0007669"/>
    <property type="project" value="UniProtKB-KW"/>
</dbReference>
<dbReference type="Gene3D" id="3.30.450.30">
    <property type="entry name" value="Dynein light chain 2a, cytoplasmic"/>
    <property type="match status" value="1"/>
</dbReference>
<dbReference type="InterPro" id="IPR048278">
    <property type="entry name" value="PFN"/>
</dbReference>
<dbReference type="InterPro" id="IPR036140">
    <property type="entry name" value="PFN_sf"/>
</dbReference>
<dbReference type="Pfam" id="PF00235">
    <property type="entry name" value="Profilin"/>
    <property type="match status" value="1"/>
</dbReference>
<dbReference type="SUPFAM" id="SSF55770">
    <property type="entry name" value="Profilin (actin-binding protein)"/>
    <property type="match status" value="1"/>
</dbReference>
<gene>
    <name type="ORF">Lokiarch_47830</name>
</gene>
<feature type="chain" id="PRO_0000450549" description="Loki profilin-1">
    <location>
        <begin position="1"/>
        <end position="134"/>
    </location>
</feature>
<feature type="region of interest" description="Loki loop" evidence="1">
    <location>
        <begin position="55"/>
        <end position="62"/>
    </location>
</feature>
<feature type="helix" evidence="7">
    <location>
        <begin position="3"/>
        <end position="15"/>
    </location>
</feature>
<feature type="strand" evidence="7">
    <location>
        <begin position="19"/>
        <end position="25"/>
    </location>
</feature>
<feature type="strand" evidence="7">
    <location>
        <begin position="31"/>
        <end position="34"/>
    </location>
</feature>
<feature type="helix" evidence="7">
    <location>
        <begin position="41"/>
        <end position="43"/>
    </location>
</feature>
<feature type="helix" evidence="7">
    <location>
        <begin position="44"/>
        <end position="52"/>
    </location>
</feature>
<feature type="strand" evidence="7">
    <location>
        <begin position="64"/>
        <end position="67"/>
    </location>
</feature>
<feature type="strand" evidence="7">
    <location>
        <begin position="70"/>
        <end position="77"/>
    </location>
</feature>
<feature type="strand" evidence="7">
    <location>
        <begin position="82"/>
        <end position="85"/>
    </location>
</feature>
<feature type="strand" evidence="7">
    <location>
        <begin position="92"/>
        <end position="99"/>
    </location>
</feature>
<feature type="strand" evidence="7">
    <location>
        <begin position="102"/>
        <end position="110"/>
    </location>
</feature>
<feature type="helix" evidence="7">
    <location>
        <begin position="116"/>
        <end position="119"/>
    </location>
</feature>
<feature type="helix" evidence="7">
    <location>
        <begin position="120"/>
        <end position="129"/>
    </location>
</feature>
<feature type="turn" evidence="7">
    <location>
        <begin position="130"/>
        <end position="133"/>
    </location>
</feature>
<accession>A0A0F8V8L2</accession>
<name>PROF1_LOKSG</name>